<comment type="function">
    <text evidence="2">The phosphoenolpyruvate-dependent sugar phosphotransferase system (sugar PTS), a major carbohydrate active transport system, catalyzes the phosphorylation of incoming sugar substrates concomitantly with their translocation across the cell membrane. The enzyme II CmtAB PTS system is involved in D-mannitol transport.</text>
</comment>
<comment type="catalytic activity">
    <reaction evidence="1 2">
        <text>D-mannitol(out) + N(pros)-phospho-L-histidyl-[protein] = D-mannitol 1-phosphate(in) + L-histidyl-[protein]</text>
        <dbReference type="Rhea" id="RHEA:33363"/>
        <dbReference type="Rhea" id="RHEA-COMP:9745"/>
        <dbReference type="Rhea" id="RHEA-COMP:9746"/>
        <dbReference type="ChEBI" id="CHEBI:16899"/>
        <dbReference type="ChEBI" id="CHEBI:29979"/>
        <dbReference type="ChEBI" id="CHEBI:61381"/>
        <dbReference type="ChEBI" id="CHEBI:64837"/>
        <dbReference type="EC" id="2.7.1.197"/>
    </reaction>
</comment>
<comment type="subunit">
    <text evidence="2">Homodimer.</text>
</comment>
<comment type="subcellular location">
    <subcellularLocation>
        <location evidence="4">Cell membrane</location>
        <topology evidence="4">Multi-pass membrane protein</topology>
    </subcellularLocation>
</comment>
<comment type="domain">
    <text evidence="4">The EIIC type-2 domain forms the PTS system translocation channel and contains the specific substrate-binding site.</text>
</comment>
<comment type="domain">
    <text evidence="3">The PTS EIIB type-2 domain is phosphorylated by phospho-EIIA on a cysteinyl residue. Then, it transfers the phosphoryl group to the sugar substrate concomitantly with the sugar uptake processed by the PTS EIIC type-2 domain.</text>
</comment>
<comment type="caution">
    <text evidence="6">Was originally thought to be a longer ORF that encodes what is now known to be mtlA and mtlF.</text>
</comment>
<comment type="sequence caution" evidence="6">
    <conflict type="frameshift">
        <sequence resource="EMBL-CDS" id="BAA07350"/>
    </conflict>
</comment>
<comment type="sequence caution" evidence="6">
    <conflict type="frameshift">
        <sequence resource="EMBL-CDS" id="BAA09029"/>
    </conflict>
</comment>
<proteinExistence type="inferred from homology"/>
<evidence type="ECO:0000250" key="1">
    <source>
        <dbReference type="UniProtKB" id="P00550"/>
    </source>
</evidence>
<evidence type="ECO:0000250" key="2">
    <source>
        <dbReference type="UniProtKB" id="P28008"/>
    </source>
</evidence>
<evidence type="ECO:0000255" key="3">
    <source>
        <dbReference type="PROSITE-ProRule" id="PRU00422"/>
    </source>
</evidence>
<evidence type="ECO:0000255" key="4">
    <source>
        <dbReference type="PROSITE-ProRule" id="PRU00427"/>
    </source>
</evidence>
<evidence type="ECO:0000303" key="5">
    <source>
    </source>
</evidence>
<evidence type="ECO:0000305" key="6"/>
<organism>
    <name type="scientific">Bacillus subtilis (strain 168)</name>
    <dbReference type="NCBI Taxonomy" id="224308"/>
    <lineage>
        <taxon>Bacteria</taxon>
        <taxon>Bacillati</taxon>
        <taxon>Bacillota</taxon>
        <taxon>Bacilli</taxon>
        <taxon>Bacillales</taxon>
        <taxon>Bacillaceae</taxon>
        <taxon>Bacillus</taxon>
    </lineage>
</organism>
<name>PTMCB_BACSU</name>
<gene>
    <name evidence="5" type="primary">mtlA</name>
    <name type="ordered locus">BSU03981</name>
    <name type="ORF">BSU03980</name>
</gene>
<feature type="chain" id="PRO_0000186610" description="PTS system mannitol-specific EIICB component">
    <location>
        <begin position="1"/>
        <end position="478"/>
    </location>
</feature>
<feature type="topological domain" description="Cytoplasmic" evidence="1">
    <location>
        <begin position="1"/>
        <end position="29"/>
    </location>
</feature>
<feature type="transmembrane region" description="Helical" evidence="1">
    <location>
        <begin position="30"/>
        <end position="51"/>
    </location>
</feature>
<feature type="topological domain" description="Extracellular" evidence="1">
    <location>
        <begin position="52"/>
        <end position="55"/>
    </location>
</feature>
<feature type="transmembrane region" description="Helical" evidence="1">
    <location>
        <begin position="56"/>
        <end position="76"/>
    </location>
</feature>
<feature type="topological domain" description="Cytoplasmic" evidence="1">
    <location>
        <begin position="77"/>
        <end position="139"/>
    </location>
</feature>
<feature type="transmembrane region" description="Helical" evidence="1">
    <location>
        <begin position="140"/>
        <end position="161"/>
    </location>
</feature>
<feature type="topological domain" description="Extracellular" evidence="1">
    <location>
        <begin position="162"/>
        <end position="170"/>
    </location>
</feature>
<feature type="transmembrane region" description="Helical" evidence="1">
    <location>
        <begin position="171"/>
        <end position="191"/>
    </location>
</feature>
<feature type="topological domain" description="Cytoplasmic" evidence="1">
    <location>
        <begin position="192"/>
        <end position="278"/>
    </location>
</feature>
<feature type="transmembrane region" description="Helical" evidence="1">
    <location>
        <begin position="279"/>
        <end position="298"/>
    </location>
</feature>
<feature type="topological domain" description="Extracellular" evidence="1">
    <location>
        <begin position="299"/>
        <end position="318"/>
    </location>
</feature>
<feature type="transmembrane region" description="Helical" evidence="1">
    <location>
        <begin position="319"/>
        <end position="340"/>
    </location>
</feature>
<feature type="topological domain" description="Cytoplasmic" evidence="1">
    <location>
        <begin position="341"/>
        <end position="478"/>
    </location>
</feature>
<feature type="domain" description="PTS EIIC type-2" evidence="4">
    <location>
        <begin position="18"/>
        <end position="347"/>
    </location>
</feature>
<feature type="domain" description="PTS EIIB type-2" evidence="3">
    <location>
        <begin position="390"/>
        <end position="478"/>
    </location>
</feature>
<feature type="active site" description="Phosphocysteine intermediate; for EIIB activity" evidence="1 2">
    <location>
        <position position="396"/>
    </location>
</feature>
<feature type="modified residue" description="Phosphocysteine; by EIIA" evidence="1 2 3">
    <location>
        <position position="396"/>
    </location>
</feature>
<feature type="sequence conflict" description="In Ref. 1; BAA07350." evidence="6" ref="1">
    <original>EML</original>
    <variation>GIR</variation>
    <location>
        <begin position="133"/>
        <end position="135"/>
    </location>
</feature>
<feature type="sequence conflict" description="In Ref. 2; BAA09029." evidence="6" ref="2">
    <original>E</original>
    <variation>G</variation>
    <location>
        <position position="133"/>
    </location>
</feature>
<feature type="sequence conflict" description="In Ref. 1; BAA07350 and 2; BAA09029." evidence="6" ref="1 2">
    <original>V</original>
    <variation>L</variation>
    <location>
        <position position="187"/>
    </location>
</feature>
<feature type="sequence conflict" description="In Ref. 1; BAA07350 and 2; BAA09029." evidence="6" ref="1 2">
    <original>L</original>
    <variation>F</variation>
    <location>
        <position position="234"/>
    </location>
</feature>
<feature type="sequence conflict" description="In Ref. 1; BAA07350 and 2; BAA09029." evidence="6" ref="1 2">
    <original>ALILAAIAGGASGLLTF</original>
    <variation>GPDSRSHCRRSKRTLNI</variation>
    <location>
        <begin position="274"/>
        <end position="290"/>
    </location>
</feature>
<feature type="sequence conflict" description="In Ref. 1; BAA07350 and 2; BAA09029." evidence="6" ref="1 2">
    <original>EASELSPESVNKIIFACDAGMGSSAMGASILRNKVK</original>
    <variation>KRLSCLLKARTKLSFRVIRDGIKCHGGIHLKKQSE</variation>
    <location>
        <begin position="380"/>
        <end position="415"/>
    </location>
</feature>
<dbReference type="EC" id="2.7.1.197" evidence="1 2"/>
<dbReference type="EMBL" id="D38161">
    <property type="protein sequence ID" value="BAA07350.1"/>
    <property type="status" value="ALT_FRAME"/>
    <property type="molecule type" value="Genomic_DNA"/>
</dbReference>
<dbReference type="EMBL" id="D50453">
    <property type="protein sequence ID" value="BAA09029.1"/>
    <property type="status" value="ALT_FRAME"/>
    <property type="molecule type" value="Genomic_DNA"/>
</dbReference>
<dbReference type="EMBL" id="AL009126">
    <property type="protein sequence ID" value="CAB12206.2"/>
    <property type="molecule type" value="Genomic_DNA"/>
</dbReference>
<dbReference type="PIR" id="E69661">
    <property type="entry name" value="E69661"/>
</dbReference>
<dbReference type="RefSeq" id="NP_388280.2">
    <property type="nucleotide sequence ID" value="NC_000964.3"/>
</dbReference>
<dbReference type="RefSeq" id="WP_010886406.1">
    <property type="nucleotide sequence ID" value="NZ_OZ025638.1"/>
</dbReference>
<dbReference type="SMR" id="P42956"/>
<dbReference type="FunCoup" id="P42956">
    <property type="interactions" value="58"/>
</dbReference>
<dbReference type="STRING" id="224308.BSU03981"/>
<dbReference type="TCDB" id="4.A.2.1.5">
    <property type="family name" value="the pts fructose-mannitol (fru) family"/>
</dbReference>
<dbReference type="PaxDb" id="224308-BSU03981"/>
<dbReference type="EnsemblBacteria" id="CAB12206">
    <property type="protein sequence ID" value="CAB12206"/>
    <property type="gene ID" value="BSU_03981"/>
</dbReference>
<dbReference type="GeneID" id="938263"/>
<dbReference type="KEGG" id="bsu:BSU03981"/>
<dbReference type="PATRIC" id="fig|224308.179.peg.421"/>
<dbReference type="eggNOG" id="COG2213">
    <property type="taxonomic scope" value="Bacteria"/>
</dbReference>
<dbReference type="InParanoid" id="P42956"/>
<dbReference type="OrthoDB" id="9814222at2"/>
<dbReference type="PhylomeDB" id="P42956"/>
<dbReference type="BioCyc" id="BSUB:BSU03981-MONOMER"/>
<dbReference type="Proteomes" id="UP000001570">
    <property type="component" value="Chromosome"/>
</dbReference>
<dbReference type="GO" id="GO:0005886">
    <property type="term" value="C:plasma membrane"/>
    <property type="evidence" value="ECO:0007669"/>
    <property type="project" value="UniProtKB-SubCell"/>
</dbReference>
<dbReference type="GO" id="GO:0016301">
    <property type="term" value="F:kinase activity"/>
    <property type="evidence" value="ECO:0007669"/>
    <property type="project" value="UniProtKB-KW"/>
</dbReference>
<dbReference type="GO" id="GO:0022872">
    <property type="term" value="F:protein-N(PI)-phosphohistidine-mannitol phosphotransferase system transmembrane transporter activity"/>
    <property type="evidence" value="ECO:0007669"/>
    <property type="project" value="InterPro"/>
</dbReference>
<dbReference type="GO" id="GO:0009401">
    <property type="term" value="P:phosphoenolpyruvate-dependent sugar phosphotransferase system"/>
    <property type="evidence" value="ECO:0007669"/>
    <property type="project" value="UniProtKB-KW"/>
</dbReference>
<dbReference type="CDD" id="cd05567">
    <property type="entry name" value="PTS_IIB_mannitol"/>
    <property type="match status" value="1"/>
</dbReference>
<dbReference type="FunFam" id="3.40.50.2300:FF:000047">
    <property type="entry name" value="PTS system mannitol-specific transporter subunit IICBA"/>
    <property type="match status" value="1"/>
</dbReference>
<dbReference type="Gene3D" id="3.40.50.2300">
    <property type="match status" value="1"/>
</dbReference>
<dbReference type="InterPro" id="IPR036095">
    <property type="entry name" value="PTS_EIIB-like_sf"/>
</dbReference>
<dbReference type="InterPro" id="IPR013011">
    <property type="entry name" value="PTS_EIIB_2"/>
</dbReference>
<dbReference type="InterPro" id="IPR003501">
    <property type="entry name" value="PTS_EIIB_2/3"/>
</dbReference>
<dbReference type="InterPro" id="IPR029503">
    <property type="entry name" value="PTS_EIIB_mannitol"/>
</dbReference>
<dbReference type="InterPro" id="IPR003352">
    <property type="entry name" value="PTS_EIIC"/>
</dbReference>
<dbReference type="InterPro" id="IPR013014">
    <property type="entry name" value="PTS_EIIC_2"/>
</dbReference>
<dbReference type="InterPro" id="IPR004718">
    <property type="entry name" value="PTS_IIC_mtl"/>
</dbReference>
<dbReference type="InterPro" id="IPR050893">
    <property type="entry name" value="Sugar_PTS"/>
</dbReference>
<dbReference type="NCBIfam" id="TIGR00851">
    <property type="entry name" value="mtlA"/>
    <property type="match status" value="1"/>
</dbReference>
<dbReference type="NCBIfam" id="NF011663">
    <property type="entry name" value="PRK15083.1"/>
    <property type="match status" value="1"/>
</dbReference>
<dbReference type="PANTHER" id="PTHR30181">
    <property type="entry name" value="MANNITOL PERMEASE IIC COMPONENT"/>
    <property type="match status" value="1"/>
</dbReference>
<dbReference type="PANTHER" id="PTHR30181:SF2">
    <property type="entry name" value="PTS SYSTEM MANNITOL-SPECIFIC EIICBA COMPONENT"/>
    <property type="match status" value="1"/>
</dbReference>
<dbReference type="Pfam" id="PF02378">
    <property type="entry name" value="PTS_EIIC"/>
    <property type="match status" value="1"/>
</dbReference>
<dbReference type="Pfam" id="PF02302">
    <property type="entry name" value="PTS_IIB"/>
    <property type="match status" value="1"/>
</dbReference>
<dbReference type="SUPFAM" id="SSF52794">
    <property type="entry name" value="PTS system IIB component-like"/>
    <property type="match status" value="1"/>
</dbReference>
<dbReference type="PROSITE" id="PS51099">
    <property type="entry name" value="PTS_EIIB_TYPE_2"/>
    <property type="match status" value="1"/>
</dbReference>
<dbReference type="PROSITE" id="PS51104">
    <property type="entry name" value="PTS_EIIC_TYPE_2"/>
    <property type="match status" value="1"/>
</dbReference>
<sequence>MQQQEQQQGGMKVKVQRFGSYLSGMIMPNIGAFIAWGIITALFIPAGWFPNEQLNTLVSPMITYLLPLLIAYTGGKMIYDHRGGVVGATAAIGVIVGSDIPMFLGAMIMGPLGGYLIKQTDKLFKDKVKQGFEMLINNFTAGIVGAALTILAFYAIGPVVLTLNKLLAAGVEVIVHANLLPVASVFVEPAKVLFLNNAINHGILSPIGIEQASQTGKSILFLVEANPGPGLGILLAYMFFGKGSSKSTAPGAAIIHFFGGIHEIYFPYILMKPALILAAIAGGASGLLTFTIFNAGLVAAASPGSIIALMAMTPRGGYFGVLAGVLVAAAVSFIVSAVILKSSKASEEDLAAATEKMQSMKGKKSQAAAALEAEQAKAEEASELSPESVNKIIFACDAGMGSSAMGASILRNKVKKAELDISVTNTAINNLPSDADIVITHKDLTDRAKAKLPNATHISVDNFLNSPKYDELIEKLKK</sequence>
<protein>
    <recommendedName>
        <fullName evidence="5">PTS system mannitol-specific EIICB component</fullName>
    </recommendedName>
    <alternativeName>
        <fullName evidence="2">EIICB-Mtl</fullName>
        <shortName evidence="2">EII-Mtl</shortName>
    </alternativeName>
    <domain>
        <recommendedName>
            <fullName evidence="2">Mannitol permease IIC component</fullName>
        </recommendedName>
        <alternativeName>
            <fullName evidence="2">PTS system mannitol-specific EIIC component</fullName>
        </alternativeName>
    </domain>
    <domain>
        <recommendedName>
            <fullName evidence="2">Mannitol-specific phosphotransferase enzyme IIB component</fullName>
            <ecNumber evidence="1 2">2.7.1.197</ecNumber>
        </recommendedName>
        <alternativeName>
            <fullName evidence="2">PTS system mannitol-specific EIIB component</fullName>
        </alternativeName>
    </domain>
</protein>
<accession>P42956</accession>
<accession>P94435</accession>
<keyword id="KW-1003">Cell membrane</keyword>
<keyword id="KW-0418">Kinase</keyword>
<keyword id="KW-0472">Membrane</keyword>
<keyword id="KW-0597">Phosphoprotein</keyword>
<keyword id="KW-0598">Phosphotransferase system</keyword>
<keyword id="KW-1185">Reference proteome</keyword>
<keyword id="KW-0762">Sugar transport</keyword>
<keyword id="KW-0808">Transferase</keyword>
<keyword id="KW-0812">Transmembrane</keyword>
<keyword id="KW-1133">Transmembrane helix</keyword>
<keyword id="KW-0813">Transport</keyword>
<reference key="1">
    <citation type="journal article" date="1995" name="Microbiology">
        <title>Determination of a 17,484 bp nucleotide sequence around the 39 degrees region of the Bacillus subtilis chromosome and similarity analysis of the products of putative ORFs.</title>
        <authorList>
            <person name="Akagawa E."/>
            <person name="Kurita K."/>
            <person name="Sugawara T."/>
            <person name="Nakamura K."/>
            <person name="Kasahara Y."/>
            <person name="Ogasawara N."/>
            <person name="Yamane K."/>
        </authorList>
    </citation>
    <scope>NUCLEOTIDE SEQUENCE [GENOMIC DNA]</scope>
    <source>
        <strain>168</strain>
    </source>
</reference>
<reference key="2">
    <citation type="journal article" date="1996" name="Microbiology">
        <title>The 25 degrees-36 degrees region of the Bacillus subtilis chromosome: determination of the sequence of a 146 kb segment and identification of 113 genes.</title>
        <authorList>
            <person name="Yamane K."/>
            <person name="Kumano M."/>
            <person name="Kurita K."/>
        </authorList>
    </citation>
    <scope>NUCLEOTIDE SEQUENCE [GENOMIC DNA]</scope>
    <source>
        <strain>168</strain>
    </source>
</reference>
<reference key="3">
    <citation type="journal article" date="1997" name="Nature">
        <title>The complete genome sequence of the Gram-positive bacterium Bacillus subtilis.</title>
        <authorList>
            <person name="Kunst F."/>
            <person name="Ogasawara N."/>
            <person name="Moszer I."/>
            <person name="Albertini A.M."/>
            <person name="Alloni G."/>
            <person name="Azevedo V."/>
            <person name="Bertero M.G."/>
            <person name="Bessieres P."/>
            <person name="Bolotin A."/>
            <person name="Borchert S."/>
            <person name="Borriss R."/>
            <person name="Boursier L."/>
            <person name="Brans A."/>
            <person name="Braun M."/>
            <person name="Brignell S.C."/>
            <person name="Bron S."/>
            <person name="Brouillet S."/>
            <person name="Bruschi C.V."/>
            <person name="Caldwell B."/>
            <person name="Capuano V."/>
            <person name="Carter N.M."/>
            <person name="Choi S.-K."/>
            <person name="Codani J.-J."/>
            <person name="Connerton I.F."/>
            <person name="Cummings N.J."/>
            <person name="Daniel R.A."/>
            <person name="Denizot F."/>
            <person name="Devine K.M."/>
            <person name="Duesterhoeft A."/>
            <person name="Ehrlich S.D."/>
            <person name="Emmerson P.T."/>
            <person name="Entian K.-D."/>
            <person name="Errington J."/>
            <person name="Fabret C."/>
            <person name="Ferrari E."/>
            <person name="Foulger D."/>
            <person name="Fritz C."/>
            <person name="Fujita M."/>
            <person name="Fujita Y."/>
            <person name="Fuma S."/>
            <person name="Galizzi A."/>
            <person name="Galleron N."/>
            <person name="Ghim S.-Y."/>
            <person name="Glaser P."/>
            <person name="Goffeau A."/>
            <person name="Golightly E.J."/>
            <person name="Grandi G."/>
            <person name="Guiseppi G."/>
            <person name="Guy B.J."/>
            <person name="Haga K."/>
            <person name="Haiech J."/>
            <person name="Harwood C.R."/>
            <person name="Henaut A."/>
            <person name="Hilbert H."/>
            <person name="Holsappel S."/>
            <person name="Hosono S."/>
            <person name="Hullo M.-F."/>
            <person name="Itaya M."/>
            <person name="Jones L.-M."/>
            <person name="Joris B."/>
            <person name="Karamata D."/>
            <person name="Kasahara Y."/>
            <person name="Klaerr-Blanchard M."/>
            <person name="Klein C."/>
            <person name="Kobayashi Y."/>
            <person name="Koetter P."/>
            <person name="Koningstein G."/>
            <person name="Krogh S."/>
            <person name="Kumano M."/>
            <person name="Kurita K."/>
            <person name="Lapidus A."/>
            <person name="Lardinois S."/>
            <person name="Lauber J."/>
            <person name="Lazarevic V."/>
            <person name="Lee S.-M."/>
            <person name="Levine A."/>
            <person name="Liu H."/>
            <person name="Masuda S."/>
            <person name="Mauel C."/>
            <person name="Medigue C."/>
            <person name="Medina N."/>
            <person name="Mellado R.P."/>
            <person name="Mizuno M."/>
            <person name="Moestl D."/>
            <person name="Nakai S."/>
            <person name="Noback M."/>
            <person name="Noone D."/>
            <person name="O'Reilly M."/>
            <person name="Ogawa K."/>
            <person name="Ogiwara A."/>
            <person name="Oudega B."/>
            <person name="Park S.-H."/>
            <person name="Parro V."/>
            <person name="Pohl T.M."/>
            <person name="Portetelle D."/>
            <person name="Porwollik S."/>
            <person name="Prescott A.M."/>
            <person name="Presecan E."/>
            <person name="Pujic P."/>
            <person name="Purnelle B."/>
            <person name="Rapoport G."/>
            <person name="Rey M."/>
            <person name="Reynolds S."/>
            <person name="Rieger M."/>
            <person name="Rivolta C."/>
            <person name="Rocha E."/>
            <person name="Roche B."/>
            <person name="Rose M."/>
            <person name="Sadaie Y."/>
            <person name="Sato T."/>
            <person name="Scanlan E."/>
            <person name="Schleich S."/>
            <person name="Schroeter R."/>
            <person name="Scoffone F."/>
            <person name="Sekiguchi J."/>
            <person name="Sekowska A."/>
            <person name="Seror S.J."/>
            <person name="Serror P."/>
            <person name="Shin B.-S."/>
            <person name="Soldo B."/>
            <person name="Sorokin A."/>
            <person name="Tacconi E."/>
            <person name="Takagi T."/>
            <person name="Takahashi H."/>
            <person name="Takemaru K."/>
            <person name="Takeuchi M."/>
            <person name="Tamakoshi A."/>
            <person name="Tanaka T."/>
            <person name="Terpstra P."/>
            <person name="Tognoni A."/>
            <person name="Tosato V."/>
            <person name="Uchiyama S."/>
            <person name="Vandenbol M."/>
            <person name="Vannier F."/>
            <person name="Vassarotti A."/>
            <person name="Viari A."/>
            <person name="Wambutt R."/>
            <person name="Wedler E."/>
            <person name="Wedler H."/>
            <person name="Weitzenegger T."/>
            <person name="Winters P."/>
            <person name="Wipat A."/>
            <person name="Yamamoto H."/>
            <person name="Yamane K."/>
            <person name="Yasumoto K."/>
            <person name="Yata K."/>
            <person name="Yoshida K."/>
            <person name="Yoshikawa H.-F."/>
            <person name="Zumstein E."/>
            <person name="Yoshikawa H."/>
            <person name="Danchin A."/>
        </authorList>
    </citation>
    <scope>NUCLEOTIDE SEQUENCE [LARGE SCALE GENOMIC DNA]</scope>
    <source>
        <strain>168</strain>
    </source>
</reference>
<reference key="4">
    <citation type="journal article" date="2009" name="Microbiology">
        <title>From a consortium sequence to a unified sequence: the Bacillus subtilis 168 reference genome a decade later.</title>
        <authorList>
            <person name="Barbe V."/>
            <person name="Cruveiller S."/>
            <person name="Kunst F."/>
            <person name="Lenoble P."/>
            <person name="Meurice G."/>
            <person name="Sekowska A."/>
            <person name="Vallenet D."/>
            <person name="Wang T."/>
            <person name="Moszer I."/>
            <person name="Medigue C."/>
            <person name="Danchin A."/>
        </authorList>
    </citation>
    <scope>SEQUENCE REVISION TO 133; 187; 234; 274-290; 380-415 AND C-TERMINUS</scope>
</reference>